<keyword id="KW-0968">Cytoplasmic vesicle</keyword>
<keyword id="KW-0256">Endoplasmic reticulum</keyword>
<keyword id="KW-0931">ER-Golgi transport</keyword>
<keyword id="KW-0472">Membrane</keyword>
<keyword id="KW-0509">mRNA transport</keyword>
<keyword id="KW-0906">Nuclear pore complex</keyword>
<keyword id="KW-0539">Nucleus</keyword>
<keyword id="KW-0653">Protein transport</keyword>
<keyword id="KW-0677">Repeat</keyword>
<keyword id="KW-0811">Translocation</keyword>
<keyword id="KW-0813">Transport</keyword>
<keyword id="KW-0853">WD repeat</keyword>
<evidence type="ECO:0000250" key="1"/>
<evidence type="ECO:0000250" key="2">
    <source>
        <dbReference type="UniProtKB" id="Q04491"/>
    </source>
</evidence>
<evidence type="ECO:0000305" key="3"/>
<dbReference type="EMBL" id="AAEY01000042">
    <property type="protein sequence ID" value="EAL19219.1"/>
    <property type="molecule type" value="Genomic_DNA"/>
</dbReference>
<dbReference type="RefSeq" id="XP_773866.1">
    <property type="nucleotide sequence ID" value="XM_768773.1"/>
</dbReference>
<dbReference type="SMR" id="P0CS51"/>
<dbReference type="GeneID" id="4937842"/>
<dbReference type="KEGG" id="cnb:CNBH3180"/>
<dbReference type="VEuPathDB" id="FungiDB:CNBH3180"/>
<dbReference type="HOGENOM" id="CLU_032441_0_0_1"/>
<dbReference type="OrthoDB" id="4593at5206"/>
<dbReference type="GO" id="GO:0030127">
    <property type="term" value="C:COPII vesicle coat"/>
    <property type="evidence" value="ECO:0007669"/>
    <property type="project" value="TreeGrafter"/>
</dbReference>
<dbReference type="GO" id="GO:0005789">
    <property type="term" value="C:endoplasmic reticulum membrane"/>
    <property type="evidence" value="ECO:0007669"/>
    <property type="project" value="UniProtKB-SubCell"/>
</dbReference>
<dbReference type="GO" id="GO:0031080">
    <property type="term" value="C:nuclear pore outer ring"/>
    <property type="evidence" value="ECO:0007669"/>
    <property type="project" value="TreeGrafter"/>
</dbReference>
<dbReference type="GO" id="GO:0005198">
    <property type="term" value="F:structural molecule activity"/>
    <property type="evidence" value="ECO:0007669"/>
    <property type="project" value="InterPro"/>
</dbReference>
<dbReference type="GO" id="GO:0090114">
    <property type="term" value="P:COPII-coated vesicle budding"/>
    <property type="evidence" value="ECO:0007669"/>
    <property type="project" value="TreeGrafter"/>
</dbReference>
<dbReference type="GO" id="GO:0051028">
    <property type="term" value="P:mRNA transport"/>
    <property type="evidence" value="ECO:0007669"/>
    <property type="project" value="UniProtKB-KW"/>
</dbReference>
<dbReference type="GO" id="GO:0032008">
    <property type="term" value="P:positive regulation of TOR signaling"/>
    <property type="evidence" value="ECO:0007669"/>
    <property type="project" value="TreeGrafter"/>
</dbReference>
<dbReference type="GO" id="GO:0032527">
    <property type="term" value="P:protein exit from endoplasmic reticulum"/>
    <property type="evidence" value="ECO:0007669"/>
    <property type="project" value="TreeGrafter"/>
</dbReference>
<dbReference type="GO" id="GO:0006606">
    <property type="term" value="P:protein import into nucleus"/>
    <property type="evidence" value="ECO:0007669"/>
    <property type="project" value="TreeGrafter"/>
</dbReference>
<dbReference type="FunFam" id="2.130.10.10:FF:001182">
    <property type="entry name" value="Unplaced genomic scaffold supercont1.58, whole genome shotgun sequence"/>
    <property type="match status" value="1"/>
</dbReference>
<dbReference type="Gene3D" id="2.130.10.10">
    <property type="entry name" value="YVTN repeat-like/Quinoprotein amine dehydrogenase"/>
    <property type="match status" value="1"/>
</dbReference>
<dbReference type="InterPro" id="IPR037363">
    <property type="entry name" value="Sec13/Seh1_fam"/>
</dbReference>
<dbReference type="InterPro" id="IPR015943">
    <property type="entry name" value="WD40/YVTN_repeat-like_dom_sf"/>
</dbReference>
<dbReference type="InterPro" id="IPR036322">
    <property type="entry name" value="WD40_repeat_dom_sf"/>
</dbReference>
<dbReference type="InterPro" id="IPR001680">
    <property type="entry name" value="WD40_rpt"/>
</dbReference>
<dbReference type="PANTHER" id="PTHR11024">
    <property type="entry name" value="NUCLEAR PORE COMPLEX PROTEIN SEC13 / SEH1 FAMILY MEMBER"/>
    <property type="match status" value="1"/>
</dbReference>
<dbReference type="PANTHER" id="PTHR11024:SF2">
    <property type="entry name" value="PROTEIN SEC13 HOMOLOG"/>
    <property type="match status" value="1"/>
</dbReference>
<dbReference type="Pfam" id="PF00400">
    <property type="entry name" value="WD40"/>
    <property type="match status" value="5"/>
</dbReference>
<dbReference type="SMART" id="SM00320">
    <property type="entry name" value="WD40"/>
    <property type="match status" value="6"/>
</dbReference>
<dbReference type="SUPFAM" id="SSF50978">
    <property type="entry name" value="WD40 repeat-like"/>
    <property type="match status" value="1"/>
</dbReference>
<dbReference type="PROSITE" id="PS50082">
    <property type="entry name" value="WD_REPEATS_2"/>
    <property type="match status" value="1"/>
</dbReference>
<dbReference type="PROSITE" id="PS50294">
    <property type="entry name" value="WD_REPEATS_REGION"/>
    <property type="match status" value="1"/>
</dbReference>
<accession>P0CS51</accession>
<accession>Q55MW6</accession>
<accession>Q5KB95</accession>
<protein>
    <recommendedName>
        <fullName>Protein transport protein SEC13</fullName>
    </recommendedName>
</protein>
<organism>
    <name type="scientific">Cryptococcus neoformans var. neoformans serotype D (strain B-3501A)</name>
    <name type="common">Filobasidiella neoformans</name>
    <dbReference type="NCBI Taxonomy" id="283643"/>
    <lineage>
        <taxon>Eukaryota</taxon>
        <taxon>Fungi</taxon>
        <taxon>Dikarya</taxon>
        <taxon>Basidiomycota</taxon>
        <taxon>Agaricomycotina</taxon>
        <taxon>Tremellomycetes</taxon>
        <taxon>Tremellales</taxon>
        <taxon>Cryptococcaceae</taxon>
        <taxon>Cryptococcus</taxon>
        <taxon>Cryptococcus neoformans species complex</taxon>
    </lineage>
</organism>
<gene>
    <name type="primary">SEC13</name>
    <name type="ordered locus">CNBH3180</name>
</gene>
<feature type="chain" id="PRO_0000410338" description="Protein transport protein SEC13">
    <location>
        <begin position="1"/>
        <end position="339"/>
    </location>
</feature>
<feature type="repeat" description="WD 1">
    <location>
        <begin position="21"/>
        <end position="60"/>
    </location>
</feature>
<feature type="repeat" description="WD 2">
    <location>
        <begin position="66"/>
        <end position="107"/>
    </location>
</feature>
<feature type="repeat" description="WD 3">
    <location>
        <begin position="124"/>
        <end position="165"/>
    </location>
</feature>
<feature type="repeat" description="WD 4">
    <location>
        <begin position="170"/>
        <end position="229"/>
    </location>
</feature>
<feature type="repeat" description="WD 5">
    <location>
        <begin position="236"/>
        <end position="279"/>
    </location>
</feature>
<feature type="repeat" description="WD 6">
    <location>
        <begin position="294"/>
        <end position="333"/>
    </location>
</feature>
<proteinExistence type="inferred from homology"/>
<reference key="1">
    <citation type="journal article" date="2005" name="Science">
        <title>The genome of the basidiomycetous yeast and human pathogen Cryptococcus neoformans.</title>
        <authorList>
            <person name="Loftus B.J."/>
            <person name="Fung E."/>
            <person name="Roncaglia P."/>
            <person name="Rowley D."/>
            <person name="Amedeo P."/>
            <person name="Bruno D."/>
            <person name="Vamathevan J."/>
            <person name="Miranda M."/>
            <person name="Anderson I.J."/>
            <person name="Fraser J.A."/>
            <person name="Allen J.E."/>
            <person name="Bosdet I.E."/>
            <person name="Brent M.R."/>
            <person name="Chiu R."/>
            <person name="Doering T.L."/>
            <person name="Donlin M.J."/>
            <person name="D'Souza C.A."/>
            <person name="Fox D.S."/>
            <person name="Grinberg V."/>
            <person name="Fu J."/>
            <person name="Fukushima M."/>
            <person name="Haas B.J."/>
            <person name="Huang J.C."/>
            <person name="Janbon G."/>
            <person name="Jones S.J.M."/>
            <person name="Koo H.L."/>
            <person name="Krzywinski M.I."/>
            <person name="Kwon-Chung K.J."/>
            <person name="Lengeler K.B."/>
            <person name="Maiti R."/>
            <person name="Marra M.A."/>
            <person name="Marra R.E."/>
            <person name="Mathewson C.A."/>
            <person name="Mitchell T.G."/>
            <person name="Pertea M."/>
            <person name="Riggs F.R."/>
            <person name="Salzberg S.L."/>
            <person name="Schein J.E."/>
            <person name="Shvartsbeyn A."/>
            <person name="Shin H."/>
            <person name="Shumway M."/>
            <person name="Specht C.A."/>
            <person name="Suh B.B."/>
            <person name="Tenney A."/>
            <person name="Utterback T.R."/>
            <person name="Wickes B.L."/>
            <person name="Wortman J.R."/>
            <person name="Wye N.H."/>
            <person name="Kronstad J.W."/>
            <person name="Lodge J.K."/>
            <person name="Heitman J."/>
            <person name="Davis R.W."/>
            <person name="Fraser C.M."/>
            <person name="Hyman R.W."/>
        </authorList>
    </citation>
    <scope>NUCLEOTIDE SEQUENCE [LARGE SCALE GENOMIC DNA]</scope>
    <source>
        <strain>B-3501A</strain>
    </source>
</reference>
<name>SEC13_CRYNB</name>
<sequence length="339" mass="36823">MCLWPLIQSAQASKPVPVETQHEDMIHDAQLDYYGKRLATCSSDRTIRIFNVIKGEAKGEPVILKGHTAAVWQVSWAHPSFGSILASCSYDGRVFIWKEVGQGQGKGSGGELQDGWERIKEHTLHTASVNSIAWAPYDLGPILACASSDGKVSVLSFQNDGSIEVNIFPAHGTGANAISWAPSVLSTVSGVSRSQQPSNSLAPQKRFVTAGSDNLIRIWGFDEEQKKWTEEETIKGHEDWVRDVAWAPNIGLPGMYIASASQDRTVLIHSRPSPSSSWTSAPLLPSLPQSQDPHFPDAVWRVSWSLAGNVLAVSCGDGKVSLWKEGVGKGWECVSDFSS</sequence>
<comment type="function">
    <text evidence="2">Component of the coat protein complex II (COPII) which promotes the formation of transport vesicles from the endoplasmic reticulum (ER). The coat has two main functions, the physical deformation of the endoplasmic reticulum membrane into vesicles and the selection of cargo molecules. It also functions as a component of the nuclear pore complex (NPC). NPC components, collectively referred to as nucleoporins (NUPs), can play the role of both NPC structural components and of docking or interaction partners for transiently associated nuclear transport factors. SEC13 is required for efficient mRNA export from the nucleus to the cytoplasm and for correct nuclear pore biogenesis and distribution (By similarity).</text>
</comment>
<comment type="subunit">
    <text evidence="2">The COPII coat is composed of at least 5 proteins: the SEC23/24 complex, the SEC13/31 complex, and the protein SAR1. Component of the nuclear pore complex (NPC). NPC constitutes the exclusive means of nucleocytoplasmic transport. NPCs allow the passive diffusion of ions and small molecules and the active, nuclear transport receptor-mediated bidirectional transport of macromolecules such as proteins, RNAs, ribonucleoparticles (RNPs), and ribosomal subunits across the nuclear envelope. Due to its 8-fold rotational symmetry, all subunits are present with 8 copies or multiples thereof.</text>
</comment>
<comment type="subcellular location">
    <subcellularLocation>
        <location evidence="1">Cytoplasmic vesicle</location>
        <location evidence="1">COPII-coated vesicle membrane</location>
        <topology evidence="1">Peripheral membrane protein</topology>
        <orientation evidence="1">Cytoplasmic side</orientation>
    </subcellularLocation>
    <subcellularLocation>
        <location evidence="1">Endoplasmic reticulum membrane</location>
        <topology evidence="1">Peripheral membrane protein</topology>
        <orientation evidence="1">Cytoplasmic side</orientation>
    </subcellularLocation>
    <subcellularLocation>
        <location evidence="2">Nucleus</location>
        <location evidence="2">Nuclear pore complex</location>
    </subcellularLocation>
</comment>
<comment type="similarity">
    <text evidence="3">Belongs to the WD repeat SEC13 family.</text>
</comment>